<feature type="chain" id="PRO_0000120458" description="Glutamate-1-semialdehyde 2,1-aminomutase">
    <location>
        <begin position="1"/>
        <end position="438"/>
    </location>
</feature>
<feature type="modified residue" description="N6-(pyridoxal phosphate)lysine" evidence="1">
    <location>
        <position position="274"/>
    </location>
</feature>
<protein>
    <recommendedName>
        <fullName evidence="1">Glutamate-1-semialdehyde 2,1-aminomutase</fullName>
        <shortName evidence="1">GSA</shortName>
        <ecNumber evidence="1">5.4.3.8</ecNumber>
    </recommendedName>
    <alternativeName>
        <fullName evidence="1">Glutamate-1-semialdehyde aminotransferase</fullName>
        <shortName evidence="1">GSA-AT</shortName>
    </alternativeName>
</protein>
<sequence length="438" mass="45777">MACVSYPYEAPVSQTLFERAAAVTPGGVNSPVRAFRAVGGTPRFMVSGNGPYLTDADGRTYVDLVCSWGPMILGHSHPEVIAAVQEAVARGTSFGTPGEGEVALAEEIVARVEPVEQVRLVSSGTEATMSAIRLARGFTRRAKVIKFAGCYHGHVDSLLAAAGSGLATFALPDTPGVTGAQAGDTIVLPYNDLDAVREAFRAHPGEIACVITEASPGNMGVVPPAPGFNQGLKDACAENGALYISDEVMTGFRTSKAGWYGVDGVRPDLMTFGKVMGGGFPAAAFGGRRDVMAHLAPAGPVYQAGTLSGNPVATAAGLAQLRLLDDAAYAKVDAVSAEIRTLVTDALTKEGVAHRLQNASNMFSVFFTDRPVNNYEDAKGQESFRFTAFFHSLLAQGVYLPPSSFESWFVSTAHDEQAVQRIADALPAAARAAAEATA</sequence>
<accession>Q82E21</accession>
<reference key="1">
    <citation type="journal article" date="2001" name="Proc. Natl. Acad. Sci. U.S.A.">
        <title>Genome sequence of an industrial microorganism Streptomyces avermitilis: deducing the ability of producing secondary metabolites.</title>
        <authorList>
            <person name="Omura S."/>
            <person name="Ikeda H."/>
            <person name="Ishikawa J."/>
            <person name="Hanamoto A."/>
            <person name="Takahashi C."/>
            <person name="Shinose M."/>
            <person name="Takahashi Y."/>
            <person name="Horikawa H."/>
            <person name="Nakazawa H."/>
            <person name="Osonoe T."/>
            <person name="Kikuchi H."/>
            <person name="Shiba T."/>
            <person name="Sakaki Y."/>
            <person name="Hattori M."/>
        </authorList>
    </citation>
    <scope>NUCLEOTIDE SEQUENCE [LARGE SCALE GENOMIC DNA]</scope>
    <source>
        <strain>ATCC 31267 / DSM 46492 / JCM 5070 / NBRC 14893 / NCIMB 12804 / NRRL 8165 / MA-4680</strain>
    </source>
</reference>
<reference key="2">
    <citation type="journal article" date="2003" name="Nat. Biotechnol.">
        <title>Complete genome sequence and comparative analysis of the industrial microorganism Streptomyces avermitilis.</title>
        <authorList>
            <person name="Ikeda H."/>
            <person name="Ishikawa J."/>
            <person name="Hanamoto A."/>
            <person name="Shinose M."/>
            <person name="Kikuchi H."/>
            <person name="Shiba T."/>
            <person name="Sakaki Y."/>
            <person name="Hattori M."/>
            <person name="Omura S."/>
        </authorList>
    </citation>
    <scope>NUCLEOTIDE SEQUENCE [LARGE SCALE GENOMIC DNA]</scope>
    <source>
        <strain>ATCC 31267 / DSM 46492 / JCM 5070 / NBRC 14893 / NCIMB 12804 / NRRL 8165 / MA-4680</strain>
    </source>
</reference>
<name>GSA_STRAW</name>
<comment type="catalytic activity">
    <reaction evidence="1">
        <text>(S)-4-amino-5-oxopentanoate = 5-aminolevulinate</text>
        <dbReference type="Rhea" id="RHEA:14265"/>
        <dbReference type="ChEBI" id="CHEBI:57501"/>
        <dbReference type="ChEBI" id="CHEBI:356416"/>
        <dbReference type="EC" id="5.4.3.8"/>
    </reaction>
</comment>
<comment type="cofactor">
    <cofactor evidence="1">
        <name>pyridoxal 5'-phosphate</name>
        <dbReference type="ChEBI" id="CHEBI:597326"/>
    </cofactor>
</comment>
<comment type="pathway">
    <text evidence="1">Porphyrin-containing compound metabolism; protoporphyrin-IX biosynthesis; 5-aminolevulinate from L-glutamyl-tRNA(Glu): step 2/2.</text>
</comment>
<comment type="subunit">
    <text evidence="1">Homodimer.</text>
</comment>
<comment type="subcellular location">
    <subcellularLocation>
        <location evidence="1">Cytoplasm</location>
    </subcellularLocation>
</comment>
<comment type="similarity">
    <text evidence="1">Belongs to the class-III pyridoxal-phosphate-dependent aminotransferase family. HemL subfamily.</text>
</comment>
<organism>
    <name type="scientific">Streptomyces avermitilis (strain ATCC 31267 / DSM 46492 / JCM 5070 / NBRC 14893 / NCIMB 12804 / NRRL 8165 / MA-4680)</name>
    <dbReference type="NCBI Taxonomy" id="227882"/>
    <lineage>
        <taxon>Bacteria</taxon>
        <taxon>Bacillati</taxon>
        <taxon>Actinomycetota</taxon>
        <taxon>Actinomycetes</taxon>
        <taxon>Kitasatosporales</taxon>
        <taxon>Streptomycetaceae</taxon>
        <taxon>Streptomyces</taxon>
    </lineage>
</organism>
<dbReference type="EC" id="5.4.3.8" evidence="1"/>
<dbReference type="EMBL" id="BA000030">
    <property type="protein sequence ID" value="BAC72507.1"/>
    <property type="molecule type" value="Genomic_DNA"/>
</dbReference>
<dbReference type="RefSeq" id="WP_010986218.1">
    <property type="nucleotide sequence ID" value="NZ_JZJK01000077.1"/>
</dbReference>
<dbReference type="SMR" id="Q82E21"/>
<dbReference type="GeneID" id="41541875"/>
<dbReference type="KEGG" id="sma:SAVERM_4795"/>
<dbReference type="eggNOG" id="COG0001">
    <property type="taxonomic scope" value="Bacteria"/>
</dbReference>
<dbReference type="HOGENOM" id="CLU_016922_1_5_11"/>
<dbReference type="OrthoDB" id="9801052at2"/>
<dbReference type="UniPathway" id="UPA00251">
    <property type="reaction ID" value="UER00317"/>
</dbReference>
<dbReference type="Proteomes" id="UP000000428">
    <property type="component" value="Chromosome"/>
</dbReference>
<dbReference type="GO" id="GO:0005737">
    <property type="term" value="C:cytoplasm"/>
    <property type="evidence" value="ECO:0007669"/>
    <property type="project" value="UniProtKB-SubCell"/>
</dbReference>
<dbReference type="GO" id="GO:0042286">
    <property type="term" value="F:glutamate-1-semialdehyde 2,1-aminomutase activity"/>
    <property type="evidence" value="ECO:0007669"/>
    <property type="project" value="UniProtKB-UniRule"/>
</dbReference>
<dbReference type="GO" id="GO:0030170">
    <property type="term" value="F:pyridoxal phosphate binding"/>
    <property type="evidence" value="ECO:0007669"/>
    <property type="project" value="InterPro"/>
</dbReference>
<dbReference type="GO" id="GO:0008483">
    <property type="term" value="F:transaminase activity"/>
    <property type="evidence" value="ECO:0007669"/>
    <property type="project" value="InterPro"/>
</dbReference>
<dbReference type="GO" id="GO:0006782">
    <property type="term" value="P:protoporphyrinogen IX biosynthetic process"/>
    <property type="evidence" value="ECO:0007669"/>
    <property type="project" value="UniProtKB-UniRule"/>
</dbReference>
<dbReference type="CDD" id="cd00610">
    <property type="entry name" value="OAT_like"/>
    <property type="match status" value="1"/>
</dbReference>
<dbReference type="FunFam" id="3.40.640.10:FF:000021">
    <property type="entry name" value="Glutamate-1-semialdehyde 2,1-aminomutase"/>
    <property type="match status" value="1"/>
</dbReference>
<dbReference type="Gene3D" id="3.90.1150.10">
    <property type="entry name" value="Aspartate Aminotransferase, domain 1"/>
    <property type="match status" value="1"/>
</dbReference>
<dbReference type="Gene3D" id="3.40.640.10">
    <property type="entry name" value="Type I PLP-dependent aspartate aminotransferase-like (Major domain)"/>
    <property type="match status" value="1"/>
</dbReference>
<dbReference type="HAMAP" id="MF_00375">
    <property type="entry name" value="HemL_aminotrans_3"/>
    <property type="match status" value="1"/>
</dbReference>
<dbReference type="InterPro" id="IPR004639">
    <property type="entry name" value="4pyrrol_synth_GluAld_NH2Trfase"/>
</dbReference>
<dbReference type="InterPro" id="IPR005814">
    <property type="entry name" value="Aminotrans_3"/>
</dbReference>
<dbReference type="InterPro" id="IPR049704">
    <property type="entry name" value="Aminotrans_3_PPA_site"/>
</dbReference>
<dbReference type="InterPro" id="IPR015424">
    <property type="entry name" value="PyrdxlP-dep_Trfase"/>
</dbReference>
<dbReference type="InterPro" id="IPR015421">
    <property type="entry name" value="PyrdxlP-dep_Trfase_major"/>
</dbReference>
<dbReference type="InterPro" id="IPR015422">
    <property type="entry name" value="PyrdxlP-dep_Trfase_small"/>
</dbReference>
<dbReference type="NCBIfam" id="TIGR00713">
    <property type="entry name" value="hemL"/>
    <property type="match status" value="1"/>
</dbReference>
<dbReference type="NCBIfam" id="NF000818">
    <property type="entry name" value="PRK00062.1"/>
    <property type="match status" value="1"/>
</dbReference>
<dbReference type="PANTHER" id="PTHR43713">
    <property type="entry name" value="GLUTAMATE-1-SEMIALDEHYDE 2,1-AMINOMUTASE"/>
    <property type="match status" value="1"/>
</dbReference>
<dbReference type="PANTHER" id="PTHR43713:SF3">
    <property type="entry name" value="GLUTAMATE-1-SEMIALDEHYDE 2,1-AMINOMUTASE 1, CHLOROPLASTIC-RELATED"/>
    <property type="match status" value="1"/>
</dbReference>
<dbReference type="Pfam" id="PF00202">
    <property type="entry name" value="Aminotran_3"/>
    <property type="match status" value="1"/>
</dbReference>
<dbReference type="SUPFAM" id="SSF53383">
    <property type="entry name" value="PLP-dependent transferases"/>
    <property type="match status" value="1"/>
</dbReference>
<dbReference type="PROSITE" id="PS00600">
    <property type="entry name" value="AA_TRANSFER_CLASS_3"/>
    <property type="match status" value="1"/>
</dbReference>
<proteinExistence type="inferred from homology"/>
<evidence type="ECO:0000255" key="1">
    <source>
        <dbReference type="HAMAP-Rule" id="MF_00375"/>
    </source>
</evidence>
<gene>
    <name evidence="1" type="primary">hemL</name>
    <name type="ordered locus">SAV_4795</name>
</gene>
<keyword id="KW-0963">Cytoplasm</keyword>
<keyword id="KW-0413">Isomerase</keyword>
<keyword id="KW-0627">Porphyrin biosynthesis</keyword>
<keyword id="KW-0663">Pyridoxal phosphate</keyword>
<keyword id="KW-1185">Reference proteome</keyword>